<dbReference type="EC" id="2.2.1.2" evidence="1"/>
<dbReference type="EMBL" id="AM295007">
    <property type="protein sequence ID" value="CAM29757.1"/>
    <property type="molecule type" value="Genomic_DNA"/>
</dbReference>
<dbReference type="SMR" id="A2RD32"/>
<dbReference type="KEGG" id="spf:SpyM50414"/>
<dbReference type="HOGENOM" id="CLU_079764_0_0_9"/>
<dbReference type="UniPathway" id="UPA00115">
    <property type="reaction ID" value="UER00414"/>
</dbReference>
<dbReference type="GO" id="GO:0005737">
    <property type="term" value="C:cytoplasm"/>
    <property type="evidence" value="ECO:0007669"/>
    <property type="project" value="UniProtKB-SubCell"/>
</dbReference>
<dbReference type="GO" id="GO:0016832">
    <property type="term" value="F:aldehyde-lyase activity"/>
    <property type="evidence" value="ECO:0007669"/>
    <property type="project" value="InterPro"/>
</dbReference>
<dbReference type="GO" id="GO:0004801">
    <property type="term" value="F:transaldolase activity"/>
    <property type="evidence" value="ECO:0007669"/>
    <property type="project" value="UniProtKB-UniRule"/>
</dbReference>
<dbReference type="GO" id="GO:0005975">
    <property type="term" value="P:carbohydrate metabolic process"/>
    <property type="evidence" value="ECO:0007669"/>
    <property type="project" value="InterPro"/>
</dbReference>
<dbReference type="GO" id="GO:0006098">
    <property type="term" value="P:pentose-phosphate shunt"/>
    <property type="evidence" value="ECO:0007669"/>
    <property type="project" value="UniProtKB-UniRule"/>
</dbReference>
<dbReference type="CDD" id="cd00956">
    <property type="entry name" value="Transaldolase_FSA"/>
    <property type="match status" value="1"/>
</dbReference>
<dbReference type="FunFam" id="3.20.20.70:FF:000018">
    <property type="entry name" value="Probable transaldolase"/>
    <property type="match status" value="1"/>
</dbReference>
<dbReference type="Gene3D" id="3.20.20.70">
    <property type="entry name" value="Aldolase class I"/>
    <property type="match status" value="1"/>
</dbReference>
<dbReference type="HAMAP" id="MF_00494">
    <property type="entry name" value="Transaldolase_3b"/>
    <property type="match status" value="1"/>
</dbReference>
<dbReference type="InterPro" id="IPR013785">
    <property type="entry name" value="Aldolase_TIM"/>
</dbReference>
<dbReference type="InterPro" id="IPR001585">
    <property type="entry name" value="TAL/FSA"/>
</dbReference>
<dbReference type="InterPro" id="IPR022999">
    <property type="entry name" value="Transaldolase_3B"/>
</dbReference>
<dbReference type="InterPro" id="IPR004731">
    <property type="entry name" value="Transaldolase_3B/F6P_aldolase"/>
</dbReference>
<dbReference type="InterPro" id="IPR018225">
    <property type="entry name" value="Transaldolase_AS"/>
</dbReference>
<dbReference type="InterPro" id="IPR033919">
    <property type="entry name" value="TSA/FSA_arc/bac"/>
</dbReference>
<dbReference type="NCBIfam" id="TIGR00875">
    <property type="entry name" value="fsa_talC_mipB"/>
    <property type="match status" value="1"/>
</dbReference>
<dbReference type="PANTHER" id="PTHR10683">
    <property type="entry name" value="TRANSALDOLASE"/>
    <property type="match status" value="1"/>
</dbReference>
<dbReference type="PANTHER" id="PTHR10683:SF36">
    <property type="entry name" value="TRANSALDOLASE"/>
    <property type="match status" value="1"/>
</dbReference>
<dbReference type="Pfam" id="PF00923">
    <property type="entry name" value="TAL_FSA"/>
    <property type="match status" value="1"/>
</dbReference>
<dbReference type="SUPFAM" id="SSF51569">
    <property type="entry name" value="Aldolase"/>
    <property type="match status" value="1"/>
</dbReference>
<dbReference type="PROSITE" id="PS01054">
    <property type="entry name" value="TRANSALDOLASE_1"/>
    <property type="match status" value="1"/>
</dbReference>
<dbReference type="PROSITE" id="PS00958">
    <property type="entry name" value="TRANSALDOLASE_2"/>
    <property type="match status" value="1"/>
</dbReference>
<accession>A2RD32</accession>
<organism>
    <name type="scientific">Streptococcus pyogenes serotype M5 (strain Manfredo)</name>
    <dbReference type="NCBI Taxonomy" id="160491"/>
    <lineage>
        <taxon>Bacteria</taxon>
        <taxon>Bacillati</taxon>
        <taxon>Bacillota</taxon>
        <taxon>Bacilli</taxon>
        <taxon>Lactobacillales</taxon>
        <taxon>Streptococcaceae</taxon>
        <taxon>Streptococcus</taxon>
    </lineage>
</organism>
<keyword id="KW-0963">Cytoplasm</keyword>
<keyword id="KW-0570">Pentose shunt</keyword>
<keyword id="KW-0704">Schiff base</keyword>
<keyword id="KW-0808">Transferase</keyword>
<gene>
    <name evidence="1" type="primary">tal</name>
    <name type="ordered locus">SpyM50414</name>
</gene>
<reference key="1">
    <citation type="journal article" date="2007" name="J. Bacteriol.">
        <title>Complete genome of acute rheumatic fever-associated serotype M5 Streptococcus pyogenes strain Manfredo.</title>
        <authorList>
            <person name="Holden M.T.G."/>
            <person name="Scott A."/>
            <person name="Cherevach I."/>
            <person name="Chillingworth T."/>
            <person name="Churcher C."/>
            <person name="Cronin A."/>
            <person name="Dowd L."/>
            <person name="Feltwell T."/>
            <person name="Hamlin N."/>
            <person name="Holroyd S."/>
            <person name="Jagels K."/>
            <person name="Moule S."/>
            <person name="Mungall K."/>
            <person name="Quail M.A."/>
            <person name="Price C."/>
            <person name="Rabbinowitsch E."/>
            <person name="Sharp S."/>
            <person name="Skelton J."/>
            <person name="Whitehead S."/>
            <person name="Barrell B.G."/>
            <person name="Kehoe M."/>
            <person name="Parkhill J."/>
        </authorList>
    </citation>
    <scope>NUCLEOTIDE SEQUENCE [LARGE SCALE GENOMIC DNA]</scope>
    <source>
        <strain>Manfredo</strain>
    </source>
</reference>
<sequence length="214" mass="23272">MKFFLDTANVAAIKAINELGVVDGVTTNPTIISREGRDFETVIKEICDIVDGPISAEVTGLTADAMVEEARSIAKWHDNVVVKIPMTTEGLKATNILSKEGIKTNVTLIFTVSQGLMAMKAGATYISPFIGRLEDIGTDAYQLISDLREIIDLYDFQAEIIAASIRTTAHVEAVAKLGAHIATIPDPLFAKMTQHPLTTNGLKTFMEDWASFKK</sequence>
<feature type="chain" id="PRO_1000060481" description="Probable transaldolase">
    <location>
        <begin position="1"/>
        <end position="214"/>
    </location>
</feature>
<feature type="active site" description="Schiff-base intermediate with substrate" evidence="1">
    <location>
        <position position="83"/>
    </location>
</feature>
<proteinExistence type="inferred from homology"/>
<comment type="function">
    <text evidence="1">Transaldolase is important for the balance of metabolites in the pentose-phosphate pathway.</text>
</comment>
<comment type="catalytic activity">
    <reaction evidence="1">
        <text>D-sedoheptulose 7-phosphate + D-glyceraldehyde 3-phosphate = D-erythrose 4-phosphate + beta-D-fructose 6-phosphate</text>
        <dbReference type="Rhea" id="RHEA:17053"/>
        <dbReference type="ChEBI" id="CHEBI:16897"/>
        <dbReference type="ChEBI" id="CHEBI:57483"/>
        <dbReference type="ChEBI" id="CHEBI:57634"/>
        <dbReference type="ChEBI" id="CHEBI:59776"/>
        <dbReference type="EC" id="2.2.1.2"/>
    </reaction>
</comment>
<comment type="pathway">
    <text evidence="1">Carbohydrate degradation; pentose phosphate pathway; D-glyceraldehyde 3-phosphate and beta-D-fructose 6-phosphate from D-ribose 5-phosphate and D-xylulose 5-phosphate (non-oxidative stage): step 2/3.</text>
</comment>
<comment type="subcellular location">
    <subcellularLocation>
        <location evidence="1">Cytoplasm</location>
    </subcellularLocation>
</comment>
<comment type="similarity">
    <text evidence="1">Belongs to the transaldolase family. Type 3B subfamily.</text>
</comment>
<evidence type="ECO:0000255" key="1">
    <source>
        <dbReference type="HAMAP-Rule" id="MF_00494"/>
    </source>
</evidence>
<name>TAL_STRPG</name>
<protein>
    <recommendedName>
        <fullName evidence="1">Probable transaldolase</fullName>
        <ecNumber evidence="1">2.2.1.2</ecNumber>
    </recommendedName>
</protein>